<evidence type="ECO:0000269" key="1">
    <source>
    </source>
</evidence>
<evidence type="ECO:0000303" key="2">
    <source>
    </source>
</evidence>
<evidence type="ECO:0000305" key="3">
    <source>
    </source>
</evidence>
<reference key="1">
    <citation type="journal article" date="2018" name="J. Proteomics">
        <title>Profiling the short, linear, non-disulfide bond-containing peptidome from the venom of the scorpion Tityus obscurus.</title>
        <authorList>
            <person name="Dias N.B."/>
            <person name="de Souza B.M."/>
            <person name="Cocchi F.K."/>
            <person name="Chalkidis H.M."/>
            <person name="Dorce V.A.C."/>
            <person name="Palma M.S."/>
        </authorList>
    </citation>
    <scope>PROTEIN SEQUENCE</scope>
    <scope>IDENTIFICATION BY MASS SPECTROMETRY</scope>
    <scope>MASS SPECTROMETRY</scope>
    <scope>SUBCELLULAR LOCATION</scope>
    <scope>SYNTHESIS</scope>
    <scope>FUNCTION</scope>
    <scope>BIOASSAY</scope>
    <source>
        <tissue>Venom</tissue>
    </source>
</reference>
<sequence>ILPNDK</sequence>
<protein>
    <recommendedName>
        <fullName evidence="2">Cryptide Pep-13</fullName>
    </recommendedName>
</protein>
<organism>
    <name type="scientific">Tityus obscurus</name>
    <name type="common">Amazonian scorpion</name>
    <name type="synonym">Tityus cambridgei</name>
    <dbReference type="NCBI Taxonomy" id="1221240"/>
    <lineage>
        <taxon>Eukaryota</taxon>
        <taxon>Metazoa</taxon>
        <taxon>Ecdysozoa</taxon>
        <taxon>Arthropoda</taxon>
        <taxon>Chelicerata</taxon>
        <taxon>Arachnida</taxon>
        <taxon>Scorpiones</taxon>
        <taxon>Buthida</taxon>
        <taxon>Buthoidea</taxon>
        <taxon>Buthidae</taxon>
        <taxon>Tityus</taxon>
    </lineage>
</organism>
<comment type="function">
    <text evidence="1">Does not induce hemolytic activity, lactate dehydrogenase (LDH) release from mast cells, mast cell degranulation, and antimicrobial effects. In vivo, injection into mice induces increase in nociceptive sensibility and causes moderate edema formation. It also reduces locomotion, suggesting an increase in anxiety, but causes no alteration in rearing (standing on hind limbs).</text>
</comment>
<comment type="subcellular location">
    <subcellularLocation>
        <location evidence="1">Secreted</location>
    </subcellularLocation>
</comment>
<comment type="tissue specificity">
    <text evidence="3">Expressed by the venom gland.</text>
</comment>
<comment type="mass spectrometry"/>
<keyword id="KW-0903">Direct protein sequencing</keyword>
<keyword id="KW-0964">Secreted</keyword>
<accession>P0DRF8</accession>
<dbReference type="GO" id="GO:0005576">
    <property type="term" value="C:extracellular region"/>
    <property type="evidence" value="ECO:0007669"/>
    <property type="project" value="UniProtKB-SubCell"/>
</dbReference>
<feature type="peptide" id="PRO_0000461748" description="Cryptide Pep-13" evidence="1">
    <location>
        <begin position="1"/>
        <end position="6"/>
    </location>
</feature>
<name>CRY13_TITOB</name>
<proteinExistence type="evidence at protein level"/>